<dbReference type="EC" id="1.14.13.9" evidence="1"/>
<dbReference type="EMBL" id="AM039952">
    <property type="protein sequence ID" value="CAJ23316.1"/>
    <property type="molecule type" value="Genomic_DNA"/>
</dbReference>
<dbReference type="RefSeq" id="WP_011347012.1">
    <property type="nucleotide sequence ID" value="NZ_CP017190.1"/>
</dbReference>
<dbReference type="SMR" id="Q3BV41"/>
<dbReference type="STRING" id="456327.BJD11_14380"/>
<dbReference type="KEGG" id="xcv:XCV1641"/>
<dbReference type="eggNOG" id="COG0654">
    <property type="taxonomic scope" value="Bacteria"/>
</dbReference>
<dbReference type="HOGENOM" id="CLU_023210_0_1_6"/>
<dbReference type="UniPathway" id="UPA00253">
    <property type="reaction ID" value="UER00328"/>
</dbReference>
<dbReference type="Proteomes" id="UP000007069">
    <property type="component" value="Chromosome"/>
</dbReference>
<dbReference type="GO" id="GO:0071949">
    <property type="term" value="F:FAD binding"/>
    <property type="evidence" value="ECO:0007669"/>
    <property type="project" value="InterPro"/>
</dbReference>
<dbReference type="GO" id="GO:0004502">
    <property type="term" value="F:kynurenine 3-monooxygenase activity"/>
    <property type="evidence" value="ECO:0007669"/>
    <property type="project" value="UniProtKB-UniRule"/>
</dbReference>
<dbReference type="GO" id="GO:0043420">
    <property type="term" value="P:anthranilate metabolic process"/>
    <property type="evidence" value="ECO:0007669"/>
    <property type="project" value="UniProtKB-UniRule"/>
</dbReference>
<dbReference type="GO" id="GO:0070189">
    <property type="term" value="P:kynurenine metabolic process"/>
    <property type="evidence" value="ECO:0007669"/>
    <property type="project" value="TreeGrafter"/>
</dbReference>
<dbReference type="GO" id="GO:0006569">
    <property type="term" value="P:L-tryptophan catabolic process"/>
    <property type="evidence" value="ECO:0007669"/>
    <property type="project" value="UniProtKB-UniRule"/>
</dbReference>
<dbReference type="GO" id="GO:0009435">
    <property type="term" value="P:NAD biosynthetic process"/>
    <property type="evidence" value="ECO:0007669"/>
    <property type="project" value="UniProtKB-UniPathway"/>
</dbReference>
<dbReference type="GO" id="GO:0019805">
    <property type="term" value="P:quinolinate biosynthetic process"/>
    <property type="evidence" value="ECO:0007669"/>
    <property type="project" value="UniProtKB-UniRule"/>
</dbReference>
<dbReference type="FunFam" id="3.50.50.60:FF:000185">
    <property type="entry name" value="Kynurenine 3-monooxygenase"/>
    <property type="match status" value="1"/>
</dbReference>
<dbReference type="Gene3D" id="3.50.50.60">
    <property type="entry name" value="FAD/NAD(P)-binding domain"/>
    <property type="match status" value="1"/>
</dbReference>
<dbReference type="HAMAP" id="MF_01971">
    <property type="entry name" value="Kynurenine_monooxygenase"/>
    <property type="match status" value="1"/>
</dbReference>
<dbReference type="InterPro" id="IPR002938">
    <property type="entry name" value="FAD-bd"/>
</dbReference>
<dbReference type="InterPro" id="IPR036188">
    <property type="entry name" value="FAD/NAD-bd_sf"/>
</dbReference>
<dbReference type="InterPro" id="IPR027545">
    <property type="entry name" value="Kynurenine_monooxygenase"/>
</dbReference>
<dbReference type="PANTHER" id="PTHR46028">
    <property type="entry name" value="KYNURENINE 3-MONOOXYGENASE"/>
    <property type="match status" value="1"/>
</dbReference>
<dbReference type="PANTHER" id="PTHR46028:SF2">
    <property type="entry name" value="KYNURENINE 3-MONOOXYGENASE"/>
    <property type="match status" value="1"/>
</dbReference>
<dbReference type="Pfam" id="PF01494">
    <property type="entry name" value="FAD_binding_3"/>
    <property type="match status" value="2"/>
</dbReference>
<dbReference type="PRINTS" id="PR00420">
    <property type="entry name" value="RNGMNOXGNASE"/>
</dbReference>
<dbReference type="SUPFAM" id="SSF51905">
    <property type="entry name" value="FAD/NAD(P)-binding domain"/>
    <property type="match status" value="1"/>
</dbReference>
<feature type="chain" id="PRO_0000361947" description="Kynurenine 3-monooxygenase">
    <location>
        <begin position="1"/>
        <end position="455"/>
    </location>
</feature>
<name>KMO_XANE5</name>
<organism>
    <name type="scientific">Xanthomonas euvesicatoria pv. vesicatoria (strain 85-10)</name>
    <name type="common">Xanthomonas campestris pv. vesicatoria</name>
    <dbReference type="NCBI Taxonomy" id="316273"/>
    <lineage>
        <taxon>Bacteria</taxon>
        <taxon>Pseudomonadati</taxon>
        <taxon>Pseudomonadota</taxon>
        <taxon>Gammaproteobacteria</taxon>
        <taxon>Lysobacterales</taxon>
        <taxon>Lysobacteraceae</taxon>
        <taxon>Xanthomonas</taxon>
    </lineage>
</organism>
<proteinExistence type="inferred from homology"/>
<sequence length="455" mass="50830">MSPVSPRSLTLIGAGLAGCLLAILLSRRGWQVTVYERRGDPRIKGYESGRSINLALAERGRHALRQAGAEDAVMAKAVMMRGRMVHPIIGQPQLQRYGRDDSEVIWSIHRAALNVALLDLAEQAGARVHFYRRLHTVGFDAGYARFIDDRDDQPHEIHFQSLIGSDGAGSALRAAMQRKSPLGERTEFLDHSYKELEIPPQPGGGFRIEGNALHLWPRGRYMCIALPNDGGTFTVTLFLPNAGEPSFATTRTGDEALALFARDFPDALPLIPQLREHWEEHPPGLLGTLTLDRWHLDGRALLIGDAAHAMVPFHGQGMNCAFEDCVALADQLDAHDDLASAFAAFEAARRDDAAAIQQMALENYLEMRDRVDDPDFLLQRELEQKLQARWPTRFVPHYTMVTFLRTRYSIALARSEIQRQILVEATRGHRDLSRIDWAALEAVVHARLEPLDGAH</sequence>
<comment type="function">
    <text evidence="1">Catalyzes the hydroxylation of L-kynurenine (L-Kyn) to form 3-hydroxy-L-kynurenine (L-3OHKyn). Required for synthesis of quinolinic acid.</text>
</comment>
<comment type="catalytic activity">
    <reaction evidence="1">
        <text>L-kynurenine + NADPH + O2 + H(+) = 3-hydroxy-L-kynurenine + NADP(+) + H2O</text>
        <dbReference type="Rhea" id="RHEA:20545"/>
        <dbReference type="ChEBI" id="CHEBI:15377"/>
        <dbReference type="ChEBI" id="CHEBI:15378"/>
        <dbReference type="ChEBI" id="CHEBI:15379"/>
        <dbReference type="ChEBI" id="CHEBI:57783"/>
        <dbReference type="ChEBI" id="CHEBI:57959"/>
        <dbReference type="ChEBI" id="CHEBI:58125"/>
        <dbReference type="ChEBI" id="CHEBI:58349"/>
        <dbReference type="EC" id="1.14.13.9"/>
    </reaction>
</comment>
<comment type="cofactor">
    <cofactor evidence="1">
        <name>FAD</name>
        <dbReference type="ChEBI" id="CHEBI:57692"/>
    </cofactor>
</comment>
<comment type="pathway">
    <text evidence="1">Cofactor biosynthesis; NAD(+) biosynthesis; quinolinate from L-kynurenine: step 1/3.</text>
</comment>
<comment type="similarity">
    <text evidence="1">Belongs to the aromatic-ring hydroxylase family. KMO subfamily.</text>
</comment>
<protein>
    <recommendedName>
        <fullName evidence="1">Kynurenine 3-monooxygenase</fullName>
        <ecNumber evidence="1">1.14.13.9</ecNumber>
    </recommendedName>
    <alternativeName>
        <fullName evidence="1">Kynurenine 3-hydroxylase</fullName>
    </alternativeName>
</protein>
<evidence type="ECO:0000255" key="1">
    <source>
        <dbReference type="HAMAP-Rule" id="MF_01971"/>
    </source>
</evidence>
<accession>Q3BV41</accession>
<keyword id="KW-0274">FAD</keyword>
<keyword id="KW-0285">Flavoprotein</keyword>
<keyword id="KW-0503">Monooxygenase</keyword>
<keyword id="KW-0521">NADP</keyword>
<keyword id="KW-0560">Oxidoreductase</keyword>
<keyword id="KW-0662">Pyridine nucleotide biosynthesis</keyword>
<reference key="1">
    <citation type="journal article" date="2005" name="J. Bacteriol.">
        <title>Insights into genome plasticity and pathogenicity of the plant pathogenic Bacterium Xanthomonas campestris pv. vesicatoria revealed by the complete genome sequence.</title>
        <authorList>
            <person name="Thieme F."/>
            <person name="Koebnik R."/>
            <person name="Bekel T."/>
            <person name="Berger C."/>
            <person name="Boch J."/>
            <person name="Buettner D."/>
            <person name="Caldana C."/>
            <person name="Gaigalat L."/>
            <person name="Goesmann A."/>
            <person name="Kay S."/>
            <person name="Kirchner O."/>
            <person name="Lanz C."/>
            <person name="Linke B."/>
            <person name="McHardy A.C."/>
            <person name="Meyer F."/>
            <person name="Mittenhuber G."/>
            <person name="Nies D.H."/>
            <person name="Niesbach-Kloesgen U."/>
            <person name="Patschkowski T."/>
            <person name="Rueckert C."/>
            <person name="Rupp O."/>
            <person name="Schneiker S."/>
            <person name="Schuster S.C."/>
            <person name="Vorhoelter F.J."/>
            <person name="Weber E."/>
            <person name="Puehler A."/>
            <person name="Bonas U."/>
            <person name="Bartels D."/>
            <person name="Kaiser O."/>
        </authorList>
    </citation>
    <scope>NUCLEOTIDE SEQUENCE [LARGE SCALE GENOMIC DNA]</scope>
    <source>
        <strain>85-10</strain>
    </source>
</reference>
<gene>
    <name evidence="1" type="primary">kmo</name>
    <name type="ordered locus">XCV1641</name>
</gene>